<keyword id="KW-0963">Cytoplasm</keyword>
<keyword id="KW-0418">Kinase</keyword>
<keyword id="KW-0808">Transferase</keyword>
<organism>
    <name type="scientific">Yersinia pseudotuberculosis serotype O:3 (strain YPIII)</name>
    <dbReference type="NCBI Taxonomy" id="502800"/>
    <lineage>
        <taxon>Bacteria</taxon>
        <taxon>Pseudomonadati</taxon>
        <taxon>Pseudomonadota</taxon>
        <taxon>Gammaproteobacteria</taxon>
        <taxon>Enterobacterales</taxon>
        <taxon>Yersiniaceae</taxon>
        <taxon>Yersinia</taxon>
    </lineage>
</organism>
<gene>
    <name evidence="1" type="primary">lsrK</name>
    <name type="ordered locus">YPK_3648</name>
</gene>
<accession>B1JLP8</accession>
<protein>
    <recommendedName>
        <fullName evidence="1">Autoinducer-2 kinase</fullName>
        <shortName evidence="1">AI-2 kinase</shortName>
        <ecNumber evidence="1">2.7.1.189</ecNumber>
    </recommendedName>
</protein>
<comment type="function">
    <text evidence="1">Catalyzes the phosphorylation of autoinducer-2 (AI-2) to phospho-AI-2, which subsequently inactivates the transcriptional regulator LsrR and leads to the transcription of the lsr operon. Phosphorylates the ring-open form of (S)-4,5-dihydroxypentane-2,3-dione (DPD), which is the precursor to all AI-2 signaling molecules, at the C5 position.</text>
</comment>
<comment type="catalytic activity">
    <reaction evidence="1">
        <text>(S)-4,5-dihydroxypentane-2,3-dione + ATP = (2S)-2-hydroxy-3,4-dioxopentyl phosphate + ADP + H(+)</text>
        <dbReference type="Rhea" id="RHEA:15377"/>
        <dbReference type="ChEBI" id="CHEBI:15378"/>
        <dbReference type="ChEBI" id="CHEBI:29484"/>
        <dbReference type="ChEBI" id="CHEBI:30616"/>
        <dbReference type="ChEBI" id="CHEBI:71677"/>
        <dbReference type="ChEBI" id="CHEBI:456216"/>
        <dbReference type="EC" id="2.7.1.189"/>
    </reaction>
</comment>
<comment type="subcellular location">
    <subcellularLocation>
        <location evidence="1">Cytoplasm</location>
    </subcellularLocation>
</comment>
<comment type="similarity">
    <text evidence="1">Belongs to the FGGY kinase family.</text>
</comment>
<feature type="chain" id="PRO_0000351609" description="Autoinducer-2 kinase">
    <location>
        <begin position="1"/>
        <end position="530"/>
    </location>
</feature>
<evidence type="ECO:0000255" key="1">
    <source>
        <dbReference type="HAMAP-Rule" id="MF_02053"/>
    </source>
</evidence>
<proteinExistence type="inferred from homology"/>
<dbReference type="EC" id="2.7.1.189" evidence="1"/>
<dbReference type="EMBL" id="CP000950">
    <property type="protein sequence ID" value="ACA69915.1"/>
    <property type="molecule type" value="Genomic_DNA"/>
</dbReference>
<dbReference type="RefSeq" id="WP_012304621.1">
    <property type="nucleotide sequence ID" value="NZ_CP009792.1"/>
</dbReference>
<dbReference type="SMR" id="B1JLP8"/>
<dbReference type="GeneID" id="49787442"/>
<dbReference type="KEGG" id="ypy:YPK_3648"/>
<dbReference type="PATRIC" id="fig|502800.11.peg.4402"/>
<dbReference type="GO" id="GO:0005737">
    <property type="term" value="C:cytoplasm"/>
    <property type="evidence" value="ECO:0007669"/>
    <property type="project" value="UniProtKB-SubCell"/>
</dbReference>
<dbReference type="GO" id="GO:0071518">
    <property type="term" value="F:autoinducer-2 kinase activity"/>
    <property type="evidence" value="ECO:0007669"/>
    <property type="project" value="UniProtKB-UniRule"/>
</dbReference>
<dbReference type="GO" id="GO:0005975">
    <property type="term" value="P:carbohydrate metabolic process"/>
    <property type="evidence" value="ECO:0007669"/>
    <property type="project" value="InterPro"/>
</dbReference>
<dbReference type="GO" id="GO:0009372">
    <property type="term" value="P:quorum sensing"/>
    <property type="evidence" value="ECO:0007669"/>
    <property type="project" value="InterPro"/>
</dbReference>
<dbReference type="CDD" id="cd07775">
    <property type="entry name" value="ASKHA_NBD_FGGY_AI-2K"/>
    <property type="match status" value="1"/>
</dbReference>
<dbReference type="Gene3D" id="3.30.420.40">
    <property type="match status" value="2"/>
</dbReference>
<dbReference type="HAMAP" id="MF_02053">
    <property type="entry name" value="LsrK"/>
    <property type="match status" value="1"/>
</dbReference>
<dbReference type="InterPro" id="IPR033676">
    <property type="entry name" value="AI-2_kinase"/>
</dbReference>
<dbReference type="InterPro" id="IPR043129">
    <property type="entry name" value="ATPase_NBD"/>
</dbReference>
<dbReference type="InterPro" id="IPR000577">
    <property type="entry name" value="Carb_kinase_FGGY"/>
</dbReference>
<dbReference type="InterPro" id="IPR018485">
    <property type="entry name" value="FGGY_C"/>
</dbReference>
<dbReference type="InterPro" id="IPR050406">
    <property type="entry name" value="FGGY_Carb_Kinase"/>
</dbReference>
<dbReference type="InterPro" id="IPR018484">
    <property type="entry name" value="FGGY_N"/>
</dbReference>
<dbReference type="NCBIfam" id="NF008187">
    <property type="entry name" value="PRK10939.1"/>
    <property type="match status" value="1"/>
</dbReference>
<dbReference type="PANTHER" id="PTHR43095:SF1">
    <property type="entry name" value="AUTOINDUCER-2 KINASE"/>
    <property type="match status" value="1"/>
</dbReference>
<dbReference type="PANTHER" id="PTHR43095">
    <property type="entry name" value="SUGAR KINASE"/>
    <property type="match status" value="1"/>
</dbReference>
<dbReference type="Pfam" id="PF02782">
    <property type="entry name" value="FGGY_C"/>
    <property type="match status" value="1"/>
</dbReference>
<dbReference type="Pfam" id="PF00370">
    <property type="entry name" value="FGGY_N"/>
    <property type="match status" value="1"/>
</dbReference>
<dbReference type="PIRSF" id="PIRSF000538">
    <property type="entry name" value="GlpK"/>
    <property type="match status" value="1"/>
</dbReference>
<dbReference type="SUPFAM" id="SSF53067">
    <property type="entry name" value="Actin-like ATPase domain"/>
    <property type="match status" value="2"/>
</dbReference>
<name>LSRK_YERPY</name>
<reference key="1">
    <citation type="submission" date="2008-02" db="EMBL/GenBank/DDBJ databases">
        <title>Complete sequence of Yersinia pseudotuberculosis YPIII.</title>
        <authorList>
            <consortium name="US DOE Joint Genome Institute"/>
            <person name="Copeland A."/>
            <person name="Lucas S."/>
            <person name="Lapidus A."/>
            <person name="Glavina del Rio T."/>
            <person name="Dalin E."/>
            <person name="Tice H."/>
            <person name="Bruce D."/>
            <person name="Goodwin L."/>
            <person name="Pitluck S."/>
            <person name="Munk A.C."/>
            <person name="Brettin T."/>
            <person name="Detter J.C."/>
            <person name="Han C."/>
            <person name="Tapia R."/>
            <person name="Schmutz J."/>
            <person name="Larimer F."/>
            <person name="Land M."/>
            <person name="Hauser L."/>
            <person name="Challacombe J.F."/>
            <person name="Green L."/>
            <person name="Lindler L.E."/>
            <person name="Nikolich M.P."/>
            <person name="Richardson P."/>
        </authorList>
    </citation>
    <scope>NUCLEOTIDE SEQUENCE [LARGE SCALE GENOMIC DNA]</scope>
    <source>
        <strain>YPIII</strain>
    </source>
</reference>
<sequence>MSQLDTTTPSGDYLMALDAGTGSVRAVIFDLNGNQIAAGQAEWLHLPVPDVPGSMEFDLTTNWQLMCQCIRQALHLAKLPASAIRAVAACSMREGIVLYDRSGTPIWACANVDARASREVSELKELHNNGFELEVYQCSGQTLALSAMPRLLWLAHYRPDIYRQAGTLTMISDWLANMLSGELAVDPSNAGTTGMLDLVTRNWQPNLLEMAGLRADILSPVKETGTLLGHVTAKAAQECGLLAGTPVVMGGGDVQLGCLGLGVVHAGQTAVLGGTFWQQVVNLPQPIIDPNMNTRINPHVIPGMVQAESISFFTGLTMRWFRDAFCAEEKLLAQRLGIDTYSLLEDMAARVPAGAYGVMPIFSDVMRFKSWYHAAPSFINLSLDPEKCNKATLFRALEENAAIVSACNLAQIAEFSGVKASSVVFAGGGAKGKLWSQILADVTGVPVKVPVVKEATALGCAIAAGVGVGLYEALDKTGERLVRWEREYIPNTEHKALYQAAKTNWQAVYTDQLGLVDCGLTTSLWKAPGL</sequence>